<comment type="function">
    <text evidence="4">May modulate WRKY transcription factor activities.</text>
</comment>
<comment type="subcellular location">
    <subcellularLocation>
        <location evidence="4">Nucleus</location>
    </subcellularLocation>
</comment>
<comment type="PTM">
    <text evidence="6">Phosphorylated on serine residues by MPK6.</text>
</comment>
<dbReference type="EMBL" id="AC018849">
    <property type="protein sequence ID" value="AAF27124.1"/>
    <property type="molecule type" value="Genomic_DNA"/>
</dbReference>
<dbReference type="EMBL" id="CP002684">
    <property type="protein sequence ID" value="AEE36406.1"/>
    <property type="molecule type" value="Genomic_DNA"/>
</dbReference>
<dbReference type="EMBL" id="BT010842">
    <property type="protein sequence ID" value="AAR24209.1"/>
    <property type="molecule type" value="mRNA"/>
</dbReference>
<dbReference type="EMBL" id="BT012614">
    <property type="protein sequence ID" value="AAT06433.1"/>
    <property type="molecule type" value="mRNA"/>
</dbReference>
<dbReference type="PIR" id="C96836">
    <property type="entry name" value="C96836"/>
</dbReference>
<dbReference type="RefSeq" id="NP_178160.1">
    <property type="nucleotide sequence ID" value="NM_106693.4"/>
</dbReference>
<dbReference type="FunCoup" id="Q9M8L3">
    <property type="interactions" value="1"/>
</dbReference>
<dbReference type="STRING" id="3702.Q9M8L3"/>
<dbReference type="iPTMnet" id="Q9M8L3"/>
<dbReference type="PaxDb" id="3702-AT1G80450.1"/>
<dbReference type="EnsemblPlants" id="AT1G80450.1">
    <property type="protein sequence ID" value="AT1G80450.1"/>
    <property type="gene ID" value="AT1G80450"/>
</dbReference>
<dbReference type="GeneID" id="844384"/>
<dbReference type="Gramene" id="AT1G80450.1">
    <property type="protein sequence ID" value="AT1G80450.1"/>
    <property type="gene ID" value="AT1G80450"/>
</dbReference>
<dbReference type="KEGG" id="ath:AT1G80450"/>
<dbReference type="Araport" id="AT1G80450"/>
<dbReference type="TAIR" id="AT1G80450"/>
<dbReference type="eggNOG" id="ENOG502S350">
    <property type="taxonomic scope" value="Eukaryota"/>
</dbReference>
<dbReference type="HOGENOM" id="CLU_069496_1_0_1"/>
<dbReference type="InParanoid" id="Q9M8L3"/>
<dbReference type="OMA" id="HSAREEH"/>
<dbReference type="OrthoDB" id="1918952at2759"/>
<dbReference type="PhylomeDB" id="Q9M8L3"/>
<dbReference type="PRO" id="PR:Q9M8L3"/>
<dbReference type="Proteomes" id="UP000006548">
    <property type="component" value="Chromosome 1"/>
</dbReference>
<dbReference type="ExpressionAtlas" id="Q9M8L3">
    <property type="expression patterns" value="baseline and differential"/>
</dbReference>
<dbReference type="GO" id="GO:0005634">
    <property type="term" value="C:nucleus"/>
    <property type="evidence" value="ECO:0007669"/>
    <property type="project" value="UniProtKB-SubCell"/>
</dbReference>
<dbReference type="InterPro" id="IPR008889">
    <property type="entry name" value="VQ"/>
</dbReference>
<dbReference type="InterPro" id="IPR039611">
    <property type="entry name" value="VQ_4/11/13/19/31/33"/>
</dbReference>
<dbReference type="PANTHER" id="PTHR33402:SF19">
    <property type="entry name" value="VQ MOTIF-CONTAINING PROTEIN 11"/>
    <property type="match status" value="1"/>
</dbReference>
<dbReference type="PANTHER" id="PTHR33402">
    <property type="entry name" value="VQ MOTIF-CONTAINING PROTEIN 11-LIKE"/>
    <property type="match status" value="1"/>
</dbReference>
<dbReference type="Pfam" id="PF05678">
    <property type="entry name" value="VQ"/>
    <property type="match status" value="1"/>
</dbReference>
<reference key="1">
    <citation type="journal article" date="2000" name="Nature">
        <title>Sequence and analysis of chromosome 1 of the plant Arabidopsis thaliana.</title>
        <authorList>
            <person name="Theologis A."/>
            <person name="Ecker J.R."/>
            <person name="Palm C.J."/>
            <person name="Federspiel N.A."/>
            <person name="Kaul S."/>
            <person name="White O."/>
            <person name="Alonso J."/>
            <person name="Altafi H."/>
            <person name="Araujo R."/>
            <person name="Bowman C.L."/>
            <person name="Brooks S.Y."/>
            <person name="Buehler E."/>
            <person name="Chan A."/>
            <person name="Chao Q."/>
            <person name="Chen H."/>
            <person name="Cheuk R.F."/>
            <person name="Chin C.W."/>
            <person name="Chung M.K."/>
            <person name="Conn L."/>
            <person name="Conway A.B."/>
            <person name="Conway A.R."/>
            <person name="Creasy T.H."/>
            <person name="Dewar K."/>
            <person name="Dunn P."/>
            <person name="Etgu P."/>
            <person name="Feldblyum T.V."/>
            <person name="Feng J.-D."/>
            <person name="Fong B."/>
            <person name="Fujii C.Y."/>
            <person name="Gill J.E."/>
            <person name="Goldsmith A.D."/>
            <person name="Haas B."/>
            <person name="Hansen N.F."/>
            <person name="Hughes B."/>
            <person name="Huizar L."/>
            <person name="Hunter J.L."/>
            <person name="Jenkins J."/>
            <person name="Johnson-Hopson C."/>
            <person name="Khan S."/>
            <person name="Khaykin E."/>
            <person name="Kim C.J."/>
            <person name="Koo H.L."/>
            <person name="Kremenetskaia I."/>
            <person name="Kurtz D.B."/>
            <person name="Kwan A."/>
            <person name="Lam B."/>
            <person name="Langin-Hooper S."/>
            <person name="Lee A."/>
            <person name="Lee J.M."/>
            <person name="Lenz C.A."/>
            <person name="Li J.H."/>
            <person name="Li Y.-P."/>
            <person name="Lin X."/>
            <person name="Liu S.X."/>
            <person name="Liu Z.A."/>
            <person name="Luros J.S."/>
            <person name="Maiti R."/>
            <person name="Marziali A."/>
            <person name="Militscher J."/>
            <person name="Miranda M."/>
            <person name="Nguyen M."/>
            <person name="Nierman W.C."/>
            <person name="Osborne B.I."/>
            <person name="Pai G."/>
            <person name="Peterson J."/>
            <person name="Pham P.K."/>
            <person name="Rizzo M."/>
            <person name="Rooney T."/>
            <person name="Rowley D."/>
            <person name="Sakano H."/>
            <person name="Salzberg S.L."/>
            <person name="Schwartz J.R."/>
            <person name="Shinn P."/>
            <person name="Southwick A.M."/>
            <person name="Sun H."/>
            <person name="Tallon L.J."/>
            <person name="Tambunga G."/>
            <person name="Toriumi M.J."/>
            <person name="Town C.D."/>
            <person name="Utterback T."/>
            <person name="Van Aken S."/>
            <person name="Vaysberg M."/>
            <person name="Vysotskaia V.S."/>
            <person name="Walker M."/>
            <person name="Wu D."/>
            <person name="Yu G."/>
            <person name="Fraser C.M."/>
            <person name="Venter J.C."/>
            <person name="Davis R.W."/>
        </authorList>
    </citation>
    <scope>NUCLEOTIDE SEQUENCE [LARGE SCALE GENOMIC DNA]</scope>
    <source>
        <strain>cv. Columbia</strain>
    </source>
</reference>
<reference key="2">
    <citation type="journal article" date="2017" name="Plant J.">
        <title>Araport11: a complete reannotation of the Arabidopsis thaliana reference genome.</title>
        <authorList>
            <person name="Cheng C.Y."/>
            <person name="Krishnakumar V."/>
            <person name="Chan A.P."/>
            <person name="Thibaud-Nissen F."/>
            <person name="Schobel S."/>
            <person name="Town C.D."/>
        </authorList>
    </citation>
    <scope>GENOME REANNOTATION</scope>
    <source>
        <strain>cv. Columbia</strain>
    </source>
</reference>
<reference key="3">
    <citation type="submission" date="2004-05" db="EMBL/GenBank/DDBJ databases">
        <title>Arabidopsis ORF clones.</title>
        <authorList>
            <person name="Cheuk R.F."/>
            <person name="Chen H."/>
            <person name="Kim C.J."/>
            <person name="Shinn P."/>
            <person name="Ecker J.R."/>
        </authorList>
    </citation>
    <scope>NUCLEOTIDE SEQUENCE [LARGE SCALE MRNA]</scope>
    <source>
        <strain>cv. Columbia</strain>
    </source>
</reference>
<reference key="4">
    <citation type="journal article" date="2012" name="Plant Physiol.">
        <title>Structural and functional analysis of VQ motif-containing proteins in Arabidopsis as interacting proteins of WRKY transcription factors.</title>
        <authorList>
            <person name="Cheng Y."/>
            <person name="Zhou Y."/>
            <person name="Yang Y."/>
            <person name="Chi Y.J."/>
            <person name="Zhou J."/>
            <person name="Chen J.Y."/>
            <person name="Wang F."/>
            <person name="Fan B."/>
            <person name="Shi K."/>
            <person name="Zhou Y.H."/>
            <person name="Yu J.Q."/>
            <person name="Chen Z."/>
        </authorList>
    </citation>
    <scope>GENE FAMILY</scope>
    <scope>NOMENCLATURE</scope>
</reference>
<reference key="5">
    <citation type="journal article" date="2014" name="New Phytol.">
        <title>The Arabidopsis thaliana mitogen-activated protein kinases MPK3 and MPK6 target a subclass of 'VQ-motif'-containing proteins to regulate immune responses.</title>
        <authorList>
            <person name="Pecher P."/>
            <person name="Eschen-Lippold L."/>
            <person name="Herklotz S."/>
            <person name="Kuhle K."/>
            <person name="Naumann K."/>
            <person name="Bethke G."/>
            <person name="Uhrig J."/>
            <person name="Weyhe M."/>
            <person name="Scheel D."/>
            <person name="Lee J."/>
        </authorList>
    </citation>
    <scope>IDENTIFICATION BY MASS SPECTROMETRY</scope>
    <scope>PHOSPHORYLATION AT SER-115 AND SER-142</scope>
</reference>
<evidence type="ECO:0000250" key="1">
    <source>
        <dbReference type="UniProtKB" id="Q5M750"/>
    </source>
</evidence>
<evidence type="ECO:0000250" key="2">
    <source>
        <dbReference type="UniProtKB" id="Q9FHZ3"/>
    </source>
</evidence>
<evidence type="ECO:0000250" key="3">
    <source>
        <dbReference type="UniProtKB" id="Q9LDZ1"/>
    </source>
</evidence>
<evidence type="ECO:0000250" key="4">
    <source>
        <dbReference type="UniProtKB" id="Q9M9F0"/>
    </source>
</evidence>
<evidence type="ECO:0000256" key="5">
    <source>
        <dbReference type="SAM" id="MobiDB-lite"/>
    </source>
</evidence>
<evidence type="ECO:0000269" key="6">
    <source>
    </source>
</evidence>
<evidence type="ECO:0000303" key="7">
    <source>
    </source>
</evidence>
<evidence type="ECO:0000303" key="8">
    <source>
    </source>
</evidence>
<evidence type="ECO:0000305" key="9"/>
<evidence type="ECO:0000312" key="10">
    <source>
        <dbReference type="Araport" id="AT1G80450"/>
    </source>
</evidence>
<evidence type="ECO:0000312" key="11">
    <source>
        <dbReference type="EMBL" id="AAF27124.1"/>
    </source>
</evidence>
<evidence type="ECO:0000312" key="12">
    <source>
        <dbReference type="EMBL" id="AEE36406.1"/>
    </source>
</evidence>
<name>VQ11_ARATH</name>
<keyword id="KW-0539">Nucleus</keyword>
<keyword id="KW-0597">Phosphoprotein</keyword>
<keyword id="KW-1185">Reference proteome</keyword>
<accession>Q9M8L3</accession>
<organism>
    <name type="scientific">Arabidopsis thaliana</name>
    <name type="common">Mouse-ear cress</name>
    <dbReference type="NCBI Taxonomy" id="3702"/>
    <lineage>
        <taxon>Eukaryota</taxon>
        <taxon>Viridiplantae</taxon>
        <taxon>Streptophyta</taxon>
        <taxon>Embryophyta</taxon>
        <taxon>Tracheophyta</taxon>
        <taxon>Spermatophyta</taxon>
        <taxon>Magnoliopsida</taxon>
        <taxon>eudicotyledons</taxon>
        <taxon>Gunneridae</taxon>
        <taxon>Pentapetalae</taxon>
        <taxon>rosids</taxon>
        <taxon>malvids</taxon>
        <taxon>Brassicales</taxon>
        <taxon>Brassicaceae</taxon>
        <taxon>Camelineae</taxon>
        <taxon>Arabidopsis</taxon>
    </lineage>
</organism>
<feature type="chain" id="PRO_0000432312" description="VQ motif-containing protein 11">
    <location>
        <begin position="1"/>
        <end position="177"/>
    </location>
</feature>
<feature type="region of interest" description="Disordered" evidence="5">
    <location>
        <begin position="115"/>
        <end position="177"/>
    </location>
</feature>
<feature type="short sequence motif" description="VQ" evidence="9">
    <location>
        <begin position="25"/>
        <end position="34"/>
    </location>
</feature>
<feature type="compositionally biased region" description="Basic and acidic residues" evidence="5">
    <location>
        <begin position="115"/>
        <end position="133"/>
    </location>
</feature>
<feature type="compositionally biased region" description="Low complexity" evidence="5">
    <location>
        <begin position="148"/>
        <end position="159"/>
    </location>
</feature>
<feature type="compositionally biased region" description="Basic and acidic residues" evidence="5">
    <location>
        <begin position="168"/>
        <end position="177"/>
    </location>
</feature>
<feature type="modified residue" description="Phosphoserine" evidence="1">
    <location>
        <position position="43"/>
    </location>
</feature>
<feature type="modified residue" description="Phosphoserine" evidence="3">
    <location>
        <position position="99"/>
    </location>
</feature>
<feature type="modified residue" description="Phosphoserine" evidence="6">
    <location>
        <position position="115"/>
    </location>
</feature>
<feature type="modified residue" description="Phosphoserine" evidence="6">
    <location>
        <position position="142"/>
    </location>
</feature>
<feature type="modified residue" description="Phosphoserine" evidence="2">
    <location>
        <position position="145"/>
    </location>
</feature>
<feature type="modified residue" description="Phosphoserine" evidence="3">
    <location>
        <position position="161"/>
    </location>
</feature>
<protein>
    <recommendedName>
        <fullName evidence="7">VQ motif-containing protein 11</fullName>
        <shortName evidence="7">AtVQ11</shortName>
    </recommendedName>
    <alternativeName>
        <fullName evidence="8">MPK3/6-targeted VQ-motif-containing protein 5</fullName>
    </alternativeName>
</protein>
<gene>
    <name evidence="7" type="primary">VQ11</name>
    <name evidence="8" type="synonym">MVQ5</name>
    <name evidence="10 12" type="ordered locus">At1g80450</name>
    <name evidence="11" type="ORF">T21F11.22</name>
</gene>
<proteinExistence type="evidence at protein level"/>
<sequence length="177" mass="19925">MSHQQPPSYATEPNTMFVQADPSNFRNIVQKLTGAPPDISSSSFSAVSAAHQKLPLTPKKPAFKLHERRQSSKKMELKVNNITNPNDAFSHFHRGFLVSPVSHLDPFWARVSPHSAREEHHAQPDKEEQKAIAEKGFYFLPSPRSGSEPAPELLPLFPLRSPNGTNHRIHEDNHRDS</sequence>